<sequence>MGPTACGKSQLAICLRKYLSIELISVDSALIYRGMDIGTDKPSFSDLYNHPHRLLNIKDPVENYSAAEFQKDVLREIDEIIKLGKIPCLVGGSMFYYNVLLHGLSILPPSNIKLREYLIQKSYEKNYLYKKLKLIDPISASRIHKNDFQRLIRALEIFYLSGKSLTELKKKNNYKLPYNIFQFAIIPPNKEWLNNKIELRIKKMLMLGFQKEVEILFLRGDLHKNLPSIRCIGYRQMWEYLEYKNSYKDMFNKTIHATRKLAKHQLTWLKNWKNINKIEYHSTSTILAKKVLDVLEKNDFSV</sequence>
<name>MIAA_BUCAT</name>
<comment type="function">
    <text evidence="1">Catalyzes the transfer of a dimethylallyl group onto the adenine at position 37 in tRNAs that read codons beginning with uridine, leading to the formation of N6-(dimethylallyl)adenosine (i(6)A).</text>
</comment>
<comment type="catalytic activity">
    <reaction evidence="1">
        <text>adenosine(37) in tRNA + dimethylallyl diphosphate = N(6)-dimethylallyladenosine(37) in tRNA + diphosphate</text>
        <dbReference type="Rhea" id="RHEA:26482"/>
        <dbReference type="Rhea" id="RHEA-COMP:10162"/>
        <dbReference type="Rhea" id="RHEA-COMP:10375"/>
        <dbReference type="ChEBI" id="CHEBI:33019"/>
        <dbReference type="ChEBI" id="CHEBI:57623"/>
        <dbReference type="ChEBI" id="CHEBI:74411"/>
        <dbReference type="ChEBI" id="CHEBI:74415"/>
        <dbReference type="EC" id="2.5.1.75"/>
    </reaction>
</comment>
<comment type="cofactor">
    <cofactor evidence="1">
        <name>Mg(2+)</name>
        <dbReference type="ChEBI" id="CHEBI:18420"/>
    </cofactor>
</comment>
<comment type="subunit">
    <text evidence="1">Monomer.</text>
</comment>
<comment type="similarity">
    <text evidence="1">Belongs to the IPP transferase family.</text>
</comment>
<protein>
    <recommendedName>
        <fullName evidence="1">tRNA dimethylallyltransferase</fullName>
        <ecNumber evidence="1">2.5.1.75</ecNumber>
    </recommendedName>
    <alternativeName>
        <fullName evidence="1">Dimethylallyl diphosphate:tRNA dimethylallyltransferase</fullName>
        <shortName evidence="1">DMAPP:tRNA dimethylallyltransferase</shortName>
        <shortName evidence="1">DMATase</shortName>
    </alternativeName>
    <alternativeName>
        <fullName evidence="1">Isopentenyl-diphosphate:tRNA isopentenyltransferase</fullName>
        <shortName evidence="1">IPP transferase</shortName>
        <shortName evidence="1">IPPT</shortName>
        <shortName evidence="1">IPTase</shortName>
    </alternativeName>
</protein>
<proteinExistence type="inferred from homology"/>
<keyword id="KW-0067">ATP-binding</keyword>
<keyword id="KW-0460">Magnesium</keyword>
<keyword id="KW-0547">Nucleotide-binding</keyword>
<keyword id="KW-0808">Transferase</keyword>
<keyword id="KW-0819">tRNA processing</keyword>
<reference key="1">
    <citation type="journal article" date="2009" name="Science">
        <title>The dynamics and time scale of ongoing genomic erosion in symbiotic bacteria.</title>
        <authorList>
            <person name="Moran N.A."/>
            <person name="McLaughlin H.J."/>
            <person name="Sorek R."/>
        </authorList>
    </citation>
    <scope>NUCLEOTIDE SEQUENCE [LARGE SCALE GENOMIC DNA]</scope>
    <source>
        <strain>Tuc7</strain>
    </source>
</reference>
<accession>B8D890</accession>
<feature type="chain" id="PRO_0000377094" description="tRNA dimethylallyltransferase">
    <location>
        <begin position="1"/>
        <end position="302"/>
    </location>
</feature>
<feature type="region of interest" description="Interaction with substrate tRNA" evidence="1">
    <location>
        <begin position="27"/>
        <end position="30"/>
    </location>
</feature>
<feature type="region of interest" description="Interaction with substrate tRNA" evidence="1">
    <location>
        <begin position="149"/>
        <end position="153"/>
    </location>
</feature>
<feature type="binding site" evidence="1">
    <location>
        <begin position="2"/>
        <end position="9"/>
    </location>
    <ligand>
        <name>ATP</name>
        <dbReference type="ChEBI" id="CHEBI:30616"/>
    </ligand>
</feature>
<feature type="binding site" evidence="1">
    <location>
        <begin position="4"/>
        <end position="9"/>
    </location>
    <ligand>
        <name>substrate</name>
    </ligand>
</feature>
<feature type="site" description="Interaction with substrate tRNA" evidence="1">
    <location>
        <position position="93"/>
    </location>
</feature>
<feature type="site" description="Interaction with substrate tRNA" evidence="1">
    <location>
        <position position="115"/>
    </location>
</feature>
<organism>
    <name type="scientific">Buchnera aphidicola subsp. Acyrthosiphon pisum (strain Tuc7)</name>
    <dbReference type="NCBI Taxonomy" id="561501"/>
    <lineage>
        <taxon>Bacteria</taxon>
        <taxon>Pseudomonadati</taxon>
        <taxon>Pseudomonadota</taxon>
        <taxon>Gammaproteobacteria</taxon>
        <taxon>Enterobacterales</taxon>
        <taxon>Erwiniaceae</taxon>
        <taxon>Buchnera</taxon>
    </lineage>
</organism>
<gene>
    <name evidence="1" type="primary">miaA</name>
    <name type="ordered locus">BUAPTUC7_563</name>
</gene>
<evidence type="ECO:0000255" key="1">
    <source>
        <dbReference type="HAMAP-Rule" id="MF_00185"/>
    </source>
</evidence>
<dbReference type="EC" id="2.5.1.75" evidence="1"/>
<dbReference type="EMBL" id="CP001158">
    <property type="protein sequence ID" value="ACL30355.1"/>
    <property type="molecule type" value="Genomic_DNA"/>
</dbReference>
<dbReference type="RefSeq" id="WP_009874517.1">
    <property type="nucleotide sequence ID" value="NC_011834.1"/>
</dbReference>
<dbReference type="SMR" id="B8D890"/>
<dbReference type="KEGG" id="bau:BUAPTUC7_563"/>
<dbReference type="HOGENOM" id="CLU_032616_0_0_6"/>
<dbReference type="GO" id="GO:0005524">
    <property type="term" value="F:ATP binding"/>
    <property type="evidence" value="ECO:0007669"/>
    <property type="project" value="UniProtKB-UniRule"/>
</dbReference>
<dbReference type="GO" id="GO:0052381">
    <property type="term" value="F:tRNA dimethylallyltransferase activity"/>
    <property type="evidence" value="ECO:0007669"/>
    <property type="project" value="UniProtKB-UniRule"/>
</dbReference>
<dbReference type="GO" id="GO:0006400">
    <property type="term" value="P:tRNA modification"/>
    <property type="evidence" value="ECO:0007669"/>
    <property type="project" value="TreeGrafter"/>
</dbReference>
<dbReference type="Gene3D" id="1.10.20.140">
    <property type="match status" value="1"/>
</dbReference>
<dbReference type="Gene3D" id="3.40.50.300">
    <property type="entry name" value="P-loop containing nucleotide triphosphate hydrolases"/>
    <property type="match status" value="1"/>
</dbReference>
<dbReference type="HAMAP" id="MF_00185">
    <property type="entry name" value="IPP_trans"/>
    <property type="match status" value="1"/>
</dbReference>
<dbReference type="InterPro" id="IPR039657">
    <property type="entry name" value="Dimethylallyltransferase"/>
</dbReference>
<dbReference type="InterPro" id="IPR018022">
    <property type="entry name" value="IPT"/>
</dbReference>
<dbReference type="InterPro" id="IPR027417">
    <property type="entry name" value="P-loop_NTPase"/>
</dbReference>
<dbReference type="NCBIfam" id="TIGR00174">
    <property type="entry name" value="miaA"/>
    <property type="match status" value="1"/>
</dbReference>
<dbReference type="PANTHER" id="PTHR11088">
    <property type="entry name" value="TRNA DIMETHYLALLYLTRANSFERASE"/>
    <property type="match status" value="1"/>
</dbReference>
<dbReference type="PANTHER" id="PTHR11088:SF60">
    <property type="entry name" value="TRNA DIMETHYLALLYLTRANSFERASE"/>
    <property type="match status" value="1"/>
</dbReference>
<dbReference type="Pfam" id="PF01715">
    <property type="entry name" value="IPPT"/>
    <property type="match status" value="1"/>
</dbReference>
<dbReference type="SUPFAM" id="SSF52540">
    <property type="entry name" value="P-loop containing nucleoside triphosphate hydrolases"/>
    <property type="match status" value="1"/>
</dbReference>